<name>RL22_SHEAM</name>
<accession>A1S223</accession>
<comment type="function">
    <text evidence="1">This protein binds specifically to 23S rRNA; its binding is stimulated by other ribosomal proteins, e.g. L4, L17, and L20. It is important during the early stages of 50S assembly. It makes multiple contacts with different domains of the 23S rRNA in the assembled 50S subunit and ribosome (By similarity).</text>
</comment>
<comment type="function">
    <text evidence="1">The globular domain of the protein is located near the polypeptide exit tunnel on the outside of the subunit, while an extended beta-hairpin is found that lines the wall of the exit tunnel in the center of the 70S ribosome.</text>
</comment>
<comment type="subunit">
    <text evidence="1">Part of the 50S ribosomal subunit.</text>
</comment>
<comment type="similarity">
    <text evidence="1">Belongs to the universal ribosomal protein uL22 family.</text>
</comment>
<reference key="1">
    <citation type="submission" date="2006-12" db="EMBL/GenBank/DDBJ databases">
        <title>Complete sequence of Shewanella amazonensis SB2B.</title>
        <authorList>
            <consortium name="US DOE Joint Genome Institute"/>
            <person name="Copeland A."/>
            <person name="Lucas S."/>
            <person name="Lapidus A."/>
            <person name="Barry K."/>
            <person name="Detter J.C."/>
            <person name="Glavina del Rio T."/>
            <person name="Hammon N."/>
            <person name="Israni S."/>
            <person name="Dalin E."/>
            <person name="Tice H."/>
            <person name="Pitluck S."/>
            <person name="Munk A.C."/>
            <person name="Brettin T."/>
            <person name="Bruce D."/>
            <person name="Han C."/>
            <person name="Tapia R."/>
            <person name="Gilna P."/>
            <person name="Schmutz J."/>
            <person name="Larimer F."/>
            <person name="Land M."/>
            <person name="Hauser L."/>
            <person name="Kyrpides N."/>
            <person name="Mikhailova N."/>
            <person name="Fredrickson J."/>
            <person name="Richardson P."/>
        </authorList>
    </citation>
    <scope>NUCLEOTIDE SEQUENCE [LARGE SCALE GENOMIC DNA]</scope>
    <source>
        <strain>ATCC BAA-1098 / SB2B</strain>
    </source>
</reference>
<evidence type="ECO:0000255" key="1">
    <source>
        <dbReference type="HAMAP-Rule" id="MF_01331"/>
    </source>
</evidence>
<evidence type="ECO:0000305" key="2"/>
<keyword id="KW-1185">Reference proteome</keyword>
<keyword id="KW-0687">Ribonucleoprotein</keyword>
<keyword id="KW-0689">Ribosomal protein</keyword>
<keyword id="KW-0694">RNA-binding</keyword>
<keyword id="KW-0699">rRNA-binding</keyword>
<dbReference type="EMBL" id="CP000507">
    <property type="protein sequence ID" value="ABL98429.1"/>
    <property type="molecule type" value="Genomic_DNA"/>
</dbReference>
<dbReference type="RefSeq" id="WP_011758339.1">
    <property type="nucleotide sequence ID" value="NC_008700.1"/>
</dbReference>
<dbReference type="SMR" id="A1S223"/>
<dbReference type="STRING" id="326297.Sama_0218"/>
<dbReference type="KEGG" id="saz:Sama_0218"/>
<dbReference type="eggNOG" id="COG0091">
    <property type="taxonomic scope" value="Bacteria"/>
</dbReference>
<dbReference type="HOGENOM" id="CLU_083987_3_3_6"/>
<dbReference type="OrthoDB" id="9805969at2"/>
<dbReference type="Proteomes" id="UP000009175">
    <property type="component" value="Chromosome"/>
</dbReference>
<dbReference type="GO" id="GO:0022625">
    <property type="term" value="C:cytosolic large ribosomal subunit"/>
    <property type="evidence" value="ECO:0007669"/>
    <property type="project" value="TreeGrafter"/>
</dbReference>
<dbReference type="GO" id="GO:0019843">
    <property type="term" value="F:rRNA binding"/>
    <property type="evidence" value="ECO:0007669"/>
    <property type="project" value="UniProtKB-UniRule"/>
</dbReference>
<dbReference type="GO" id="GO:0003735">
    <property type="term" value="F:structural constituent of ribosome"/>
    <property type="evidence" value="ECO:0007669"/>
    <property type="project" value="InterPro"/>
</dbReference>
<dbReference type="GO" id="GO:0006412">
    <property type="term" value="P:translation"/>
    <property type="evidence" value="ECO:0007669"/>
    <property type="project" value="UniProtKB-UniRule"/>
</dbReference>
<dbReference type="CDD" id="cd00336">
    <property type="entry name" value="Ribosomal_L22"/>
    <property type="match status" value="1"/>
</dbReference>
<dbReference type="FunFam" id="3.90.470.10:FF:000001">
    <property type="entry name" value="50S ribosomal protein L22"/>
    <property type="match status" value="1"/>
</dbReference>
<dbReference type="Gene3D" id="3.90.470.10">
    <property type="entry name" value="Ribosomal protein L22/L17"/>
    <property type="match status" value="1"/>
</dbReference>
<dbReference type="HAMAP" id="MF_01331_B">
    <property type="entry name" value="Ribosomal_uL22_B"/>
    <property type="match status" value="1"/>
</dbReference>
<dbReference type="InterPro" id="IPR001063">
    <property type="entry name" value="Ribosomal_uL22"/>
</dbReference>
<dbReference type="InterPro" id="IPR005727">
    <property type="entry name" value="Ribosomal_uL22_bac/chlpt-type"/>
</dbReference>
<dbReference type="InterPro" id="IPR047867">
    <property type="entry name" value="Ribosomal_uL22_bac/org-type"/>
</dbReference>
<dbReference type="InterPro" id="IPR018260">
    <property type="entry name" value="Ribosomal_uL22_CS"/>
</dbReference>
<dbReference type="InterPro" id="IPR036394">
    <property type="entry name" value="Ribosomal_uL22_sf"/>
</dbReference>
<dbReference type="NCBIfam" id="TIGR01044">
    <property type="entry name" value="rplV_bact"/>
    <property type="match status" value="1"/>
</dbReference>
<dbReference type="PANTHER" id="PTHR13501">
    <property type="entry name" value="CHLOROPLAST 50S RIBOSOMAL PROTEIN L22-RELATED"/>
    <property type="match status" value="1"/>
</dbReference>
<dbReference type="PANTHER" id="PTHR13501:SF8">
    <property type="entry name" value="LARGE RIBOSOMAL SUBUNIT PROTEIN UL22M"/>
    <property type="match status" value="1"/>
</dbReference>
<dbReference type="Pfam" id="PF00237">
    <property type="entry name" value="Ribosomal_L22"/>
    <property type="match status" value="1"/>
</dbReference>
<dbReference type="SUPFAM" id="SSF54843">
    <property type="entry name" value="Ribosomal protein L22"/>
    <property type="match status" value="1"/>
</dbReference>
<dbReference type="PROSITE" id="PS00464">
    <property type="entry name" value="RIBOSOMAL_L22"/>
    <property type="match status" value="1"/>
</dbReference>
<sequence>MEVLAKHRFARTSPQKARLVADQIRGLPVAKALEILTFSPKKAAVLVKKVVDSAIANAEHNEGADIDDLKIAKVFVDEGPTMKRIMPRAKGRADRIIKRTSHITVVVSDR</sequence>
<gene>
    <name evidence="1" type="primary">rplV</name>
    <name type="ordered locus">Sama_0218</name>
</gene>
<protein>
    <recommendedName>
        <fullName evidence="1">Large ribosomal subunit protein uL22</fullName>
    </recommendedName>
    <alternativeName>
        <fullName evidence="2">50S ribosomal protein L22</fullName>
    </alternativeName>
</protein>
<feature type="chain" id="PRO_1000052642" description="Large ribosomal subunit protein uL22">
    <location>
        <begin position="1"/>
        <end position="110"/>
    </location>
</feature>
<proteinExistence type="inferred from homology"/>
<organism>
    <name type="scientific">Shewanella amazonensis (strain ATCC BAA-1098 / SB2B)</name>
    <dbReference type="NCBI Taxonomy" id="326297"/>
    <lineage>
        <taxon>Bacteria</taxon>
        <taxon>Pseudomonadati</taxon>
        <taxon>Pseudomonadota</taxon>
        <taxon>Gammaproteobacteria</taxon>
        <taxon>Alteromonadales</taxon>
        <taxon>Shewanellaceae</taxon>
        <taxon>Shewanella</taxon>
    </lineage>
</organism>